<proteinExistence type="evidence at protein level"/>
<keyword id="KW-0325">Glycoprotein</keyword>
<keyword id="KW-0472">Membrane</keyword>
<keyword id="KW-0812">Transmembrane</keyword>
<keyword id="KW-1133">Transmembrane helix</keyword>
<accession>L7WU90</accession>
<gene>
    <name evidence="7" type="primary">notO'</name>
</gene>
<name>NOTO_ASPVE</name>
<organism>
    <name type="scientific">Aspergillus versicolor</name>
    <dbReference type="NCBI Taxonomy" id="46472"/>
    <lineage>
        <taxon>Eukaryota</taxon>
        <taxon>Fungi</taxon>
        <taxon>Dikarya</taxon>
        <taxon>Ascomycota</taxon>
        <taxon>Pezizomycotina</taxon>
        <taxon>Eurotiomycetes</taxon>
        <taxon>Eurotiomycetidae</taxon>
        <taxon>Eurotiales</taxon>
        <taxon>Aspergillaceae</taxon>
        <taxon>Aspergillus</taxon>
        <taxon>Aspergillus subgen. Nidulantes</taxon>
    </lineage>
</organism>
<comment type="function">
    <text evidence="5 6 9">Part of the gene cluster that mediates the biosynthesis of notoamide, a fungal indole alkaloid that belongs to a family of natural products containing a characteristic bicyclo[2.2.2]diazaoctane core (PubMed:23213353). The first step of notoamide biosynthesis involves coupling of L-proline and L-tryptophan by the bimodular NRPS notE', to produce cyclo-L-tryptophan-L-proline called brevianamide F (Probable). The reverse prenyltransferase notF' then acts as a deoxybrevianamide E synthase and converts brevianamide F to deoxybrevianamide E via reverse prenylation at C-2 of the indole ring leading to the bicyclo[2.2.2]diazaoctane core (Probable) (PubMed:22660767). Deoxybrevianamide E is further hydroxylated at C-6 of the indole ring, likely catalyzed by the cytochrome P450 monooxygenase notG', to yield 6-hydroxy-deoxybrevianamide E (Probable). 6-hydroxy-deoxybrevianamide E is a specific substrate of the prenyltransferase notC' for normal prenylation at C-7 to produce 6-hydroxy-7-prenyl-deoxybrevianamide, also called notoamide S (Probable). As the proposed pivotal branching point in notoamide biosynthesis, notoamide S can be diverted to notoamide E through an oxidative pyran ring closure putatively catalyzed by either notH' cytochrome P450 monooxygenase or the notD' FAD-linked oxidoreductase (Probable). This step would be followed by an indole 2,3-epoxidation-initiated pinacol-like rearrangement catalyzed by the notB' FAD-dependent monooxygenase leading to the formation of notoamide C and notoamide D (Probable). On the other hand notoamide S is converted to notoamide T by notH' (or notD'), a bifunctional oxidase that also functions as the intramolecular Diels-Alderase responsible for generation of (-)-notoamide T (Probable). To generate antipodal (+)-notoaminide T, notH (or notD) in Aspergillus strain MF297-2 is expected to catalyze a Diels-Alder reaction leading to the opposite stereochemistry (Probable). The remaining oxidoreductase notD' (or notH') likely catalyzes the oxidative pyran ring formation to yield (-)-stephacidin A (Probable). The FAD-dependent monooxygenase notI' is highly similar to notB' and is predicted to catalyze a similar conversion from (-)-stephacidin A to (+)-notoamide B via the 2,3-epoxidation of (-)-stephacidin A followed by a pinacol-type rearrangement (Probable). Finally, it remains unclear which enzyme could be responsible for the final hydroxylation steps leading to notoamide A and sclerotiamide (Probable). The function of notO' in the notoamide biosynthesis has not been determined yet (Probable).</text>
</comment>
<comment type="subcellular location">
    <subcellularLocation>
        <location evidence="1">Membrane</location>
        <topology evidence="1">Multi-pass membrane protein</topology>
    </subcellularLocation>
</comment>
<comment type="biotechnology">
    <text evidence="4">Notoamides have been shown to exhibit antitumoral activities (PubMed:17304611). Notoamides A-C show moderate cytotoxicity against HeLa and L1210 cells with IC(50) values in the range of 22-52 mg/ml, but the IC(50) value of notoamide D is greater than 100 mg/ml (PubMed:17304611). Moreover, notoamide C induces G2/M-cell cycle arrest at a concentration of 6.3 mg/ml (PubMed:17304611).</text>
</comment>
<comment type="similarity">
    <text evidence="8">Belongs to the unc-93 family.</text>
</comment>
<evidence type="ECO:0000255" key="1"/>
<evidence type="ECO:0000255" key="2">
    <source>
        <dbReference type="PROSITE-ProRule" id="PRU00498"/>
    </source>
</evidence>
<evidence type="ECO:0000256" key="3">
    <source>
        <dbReference type="SAM" id="MobiDB-lite"/>
    </source>
</evidence>
<evidence type="ECO:0000269" key="4">
    <source>
    </source>
</evidence>
<evidence type="ECO:0000269" key="5">
    <source>
    </source>
</evidence>
<evidence type="ECO:0000269" key="6">
    <source>
    </source>
</evidence>
<evidence type="ECO:0000303" key="7">
    <source>
    </source>
</evidence>
<evidence type="ECO:0000305" key="8"/>
<evidence type="ECO:0000305" key="9">
    <source>
    </source>
</evidence>
<sequence length="462" mass="50806">MNTPTPTQRTWYRTTIFNVSVVAVCAFIAPGLWAAMNGLGGAGSADPYYVNAANAVIFCLQVVVCVFGSSLIAKIGLKWAFALGMVGFPIYASSVYCNVKYNNSWYIMLACVIDGICSGIFWLTEGAIVLAYPEKHRRGKYLAYWLASRIMGQMIGGAVTLGVNAGNQEEGHISVQTYLVFISIQAIGPFVAATLSPPEKVQRSDQSKVKINLPAGLKAELHAMWKLLGRTEILLLLPMMFQSVFSEAFFSTYNATYFTVRSRALSSLVASTCVIISNFLLGFFLDWRRLSVNTRAMAAFIIIYAFELSLYVYAMVVNKEYERQEPRPLFDWTDDGFGRAVCVYILMLVGFNLMYDYLYWLIGTVNRDGGDIIRLSAVVRGVESAGQAISYGINSVDSFLLSSAVAVNLSFFAACIVPSAFVIYRVGVVNGVKVHHIQQDETLQTSGEGSHDIMDANGKSDD</sequence>
<feature type="chain" id="PRO_0000448824" description="Notoamide biosynthesis cluster protein O'">
    <location>
        <begin position="1"/>
        <end position="462"/>
    </location>
</feature>
<feature type="transmembrane region" description="Helical" evidence="1">
    <location>
        <begin position="16"/>
        <end position="36"/>
    </location>
</feature>
<feature type="transmembrane region" description="Helical" evidence="1">
    <location>
        <begin position="55"/>
        <end position="75"/>
    </location>
</feature>
<feature type="transmembrane region" description="Helical" evidence="1">
    <location>
        <begin position="79"/>
        <end position="99"/>
    </location>
</feature>
<feature type="transmembrane region" description="Helical" evidence="1">
    <location>
        <begin position="104"/>
        <end position="124"/>
    </location>
</feature>
<feature type="transmembrane region" description="Helical" evidence="1">
    <location>
        <begin position="143"/>
        <end position="163"/>
    </location>
</feature>
<feature type="transmembrane region" description="Helical" evidence="1">
    <location>
        <begin position="173"/>
        <end position="193"/>
    </location>
</feature>
<feature type="transmembrane region" description="Helical" evidence="1">
    <location>
        <begin position="233"/>
        <end position="253"/>
    </location>
</feature>
<feature type="transmembrane region" description="Helical" evidence="1">
    <location>
        <begin position="265"/>
        <end position="285"/>
    </location>
</feature>
<feature type="transmembrane region" description="Helical" evidence="1">
    <location>
        <begin position="297"/>
        <end position="317"/>
    </location>
</feature>
<feature type="transmembrane region" description="Helical" evidence="1">
    <location>
        <begin position="343"/>
        <end position="363"/>
    </location>
</feature>
<feature type="transmembrane region" description="Helical" evidence="1">
    <location>
        <begin position="404"/>
        <end position="424"/>
    </location>
</feature>
<feature type="region of interest" description="Disordered" evidence="3">
    <location>
        <begin position="443"/>
        <end position="462"/>
    </location>
</feature>
<feature type="compositionally biased region" description="Basic and acidic residues" evidence="3">
    <location>
        <begin position="449"/>
        <end position="462"/>
    </location>
</feature>
<feature type="glycosylation site" description="N-linked (GlcNAc...) asparagine" evidence="2">
    <location>
        <position position="102"/>
    </location>
</feature>
<feature type="glycosylation site" description="N-linked (GlcNAc...) asparagine" evidence="2">
    <location>
        <position position="254"/>
    </location>
</feature>
<reference key="1">
    <citation type="journal article" date="2012" name="Med. Chem. Commun.">
        <title>Comparative analysis of the biosynthetic systems for fungal bicyclo[2.2.2]diazaoctane indole alkaloids: the (+)/(-)-notoamide, paraherquamide and malbrancheamide pathways.</title>
        <authorList>
            <person name="Li S."/>
            <person name="Anand K."/>
            <person name="Tran H."/>
            <person name="Yu F."/>
            <person name="Finefield J.M."/>
            <person name="Sunderhaus J.D."/>
            <person name="McAfoos T.J."/>
            <person name="Tsukamoto S."/>
            <person name="Williams R.M."/>
            <person name="Sherman D.H."/>
        </authorList>
    </citation>
    <scope>NUCLEOTIDE SEQUENCE [GENOMIC DNA]</scope>
    <source>
        <strain>NRRL 35600</strain>
    </source>
</reference>
<reference key="2">
    <citation type="journal article" date="2007" name="Angew. Chem. Int. Ed.">
        <title>Notoamides A-D: prenylated indole alkaloids isolated from a marine-derived fungus, Aspergillus sp.</title>
        <authorList>
            <person name="Kato H."/>
            <person name="Yoshida T."/>
            <person name="Tokue T."/>
            <person name="Nojiri Y."/>
            <person name="Hirota H."/>
            <person name="Ohta T."/>
            <person name="Williams R.M."/>
            <person name="Tsukamoto S."/>
        </authorList>
    </citation>
    <scope>BIOTECHNOLOGY</scope>
</reference>
<reference key="3">
    <citation type="journal article" date="2013" name="Appl. Microbiol. Biotechnol.">
        <title>Identification of a brevianamide F reverse prenyltransferase BrePT from Aspergillus versicolor with a broad substrate specificity towards tryptophan-containing cyclic dipeptides.</title>
        <authorList>
            <person name="Yin S."/>
            <person name="Yu X."/>
            <person name="Wang Q."/>
            <person name="Liu X.Q."/>
            <person name="Li S.M."/>
        </authorList>
    </citation>
    <scope>FUNCTION</scope>
</reference>
<dbReference type="EMBL" id="JQ708194">
    <property type="protein sequence ID" value="AGC83586.1"/>
    <property type="molecule type" value="Genomic_DNA"/>
</dbReference>
<dbReference type="SMR" id="L7WU90"/>
<dbReference type="GlyCosmos" id="L7WU90">
    <property type="glycosylation" value="2 sites, No reported glycans"/>
</dbReference>
<dbReference type="VEuPathDB" id="FungiDB:ASPVEDRAFT_33850"/>
<dbReference type="GO" id="GO:0016020">
    <property type="term" value="C:membrane"/>
    <property type="evidence" value="ECO:0007669"/>
    <property type="project" value="UniProtKB-SubCell"/>
</dbReference>
<dbReference type="GO" id="GO:0022857">
    <property type="term" value="F:transmembrane transporter activity"/>
    <property type="evidence" value="ECO:0007669"/>
    <property type="project" value="InterPro"/>
</dbReference>
<dbReference type="Gene3D" id="1.20.1250.20">
    <property type="entry name" value="MFS general substrate transporter like domains"/>
    <property type="match status" value="1"/>
</dbReference>
<dbReference type="InterPro" id="IPR011701">
    <property type="entry name" value="MFS"/>
</dbReference>
<dbReference type="InterPro" id="IPR036259">
    <property type="entry name" value="MFS_trans_sf"/>
</dbReference>
<dbReference type="InterPro" id="IPR051617">
    <property type="entry name" value="UNC-93-like_regulator"/>
</dbReference>
<dbReference type="PANTHER" id="PTHR23294:SF19">
    <property type="entry name" value="DUF895 DOMAIN MEMBRANE PROTEIN-RELATED"/>
    <property type="match status" value="1"/>
</dbReference>
<dbReference type="PANTHER" id="PTHR23294">
    <property type="entry name" value="ET TRANSLATION PRODUCT-RELATED"/>
    <property type="match status" value="1"/>
</dbReference>
<dbReference type="Pfam" id="PF07690">
    <property type="entry name" value="MFS_1"/>
    <property type="match status" value="1"/>
</dbReference>
<dbReference type="SUPFAM" id="SSF103473">
    <property type="entry name" value="MFS general substrate transporter"/>
    <property type="match status" value="1"/>
</dbReference>
<protein>
    <recommendedName>
        <fullName evidence="7">Notoamide biosynthesis cluster protein O'</fullName>
    </recommendedName>
    <alternativeName>
        <fullName evidence="8">UNC93-like protein notO'</fullName>
    </alternativeName>
</protein>